<organism>
    <name type="scientific">Mus musculus</name>
    <name type="common">Mouse</name>
    <dbReference type="NCBI Taxonomy" id="10090"/>
    <lineage>
        <taxon>Eukaryota</taxon>
        <taxon>Metazoa</taxon>
        <taxon>Chordata</taxon>
        <taxon>Craniata</taxon>
        <taxon>Vertebrata</taxon>
        <taxon>Euteleostomi</taxon>
        <taxon>Mammalia</taxon>
        <taxon>Eutheria</taxon>
        <taxon>Euarchontoglires</taxon>
        <taxon>Glires</taxon>
        <taxon>Rodentia</taxon>
        <taxon>Myomorpha</taxon>
        <taxon>Muroidea</taxon>
        <taxon>Muridae</taxon>
        <taxon>Murinae</taxon>
        <taxon>Mus</taxon>
        <taxon>Mus</taxon>
    </lineage>
</organism>
<sequence>QILLTQSPAIMSASPGQKVTMTCSASSSVSYMHWYQQKSGTSPKRWIYDTSKLASGVPARFSGSGSATSYSLTITSMQAEDAATYYCQQWSSNPLTFGAGTKLXLKR</sequence>
<reference key="1">
    <citation type="journal article" date="1983" name="Nature">
        <title>mRNA sequences define an unusually restricted IgG response to 2-phenyloxazolone and its early diversification.</title>
        <authorList>
            <person name="Kaartinen M."/>
            <person name="Griffiths G.M."/>
            <person name="Markham A.F."/>
            <person name="Milstein C."/>
        </authorList>
    </citation>
    <scope>NUCLEOTIDE SEQUENCE [MRNA]</scope>
</reference>
<proteinExistence type="evidence at transcript level"/>
<accession>P04941</accession>
<dbReference type="EMBL" id="K00737">
    <property type="protein sequence ID" value="AAA38682.1"/>
    <property type="molecule type" value="mRNA"/>
</dbReference>
<dbReference type="FunCoup" id="P04941">
    <property type="interactions" value="726"/>
</dbReference>
<dbReference type="InParanoid" id="P04941"/>
<dbReference type="Proteomes" id="UP000000589">
    <property type="component" value="Unplaced"/>
</dbReference>
<dbReference type="RNAct" id="P04941">
    <property type="molecule type" value="protein"/>
</dbReference>
<dbReference type="GO" id="GO:0019814">
    <property type="term" value="C:immunoglobulin complex"/>
    <property type="evidence" value="ECO:0000318"/>
    <property type="project" value="GO_Central"/>
</dbReference>
<dbReference type="GO" id="GO:0002250">
    <property type="term" value="P:adaptive immune response"/>
    <property type="evidence" value="ECO:0007669"/>
    <property type="project" value="UniProtKB-KW"/>
</dbReference>
<dbReference type="GO" id="GO:0006955">
    <property type="term" value="P:immune response"/>
    <property type="evidence" value="ECO:0000318"/>
    <property type="project" value="GO_Central"/>
</dbReference>
<dbReference type="FunFam" id="2.60.40.10:FF:001317">
    <property type="entry name" value="Immunoglobulin kappa chain variable 4-54"/>
    <property type="match status" value="1"/>
</dbReference>
<dbReference type="Gene3D" id="2.60.40.10">
    <property type="entry name" value="Immunoglobulins"/>
    <property type="match status" value="1"/>
</dbReference>
<dbReference type="InterPro" id="IPR007110">
    <property type="entry name" value="Ig-like_dom"/>
</dbReference>
<dbReference type="InterPro" id="IPR036179">
    <property type="entry name" value="Ig-like_dom_sf"/>
</dbReference>
<dbReference type="InterPro" id="IPR013783">
    <property type="entry name" value="Ig-like_fold"/>
</dbReference>
<dbReference type="InterPro" id="IPR003599">
    <property type="entry name" value="Ig_sub"/>
</dbReference>
<dbReference type="InterPro" id="IPR013106">
    <property type="entry name" value="Ig_V-set"/>
</dbReference>
<dbReference type="InterPro" id="IPR050150">
    <property type="entry name" value="IgV_Light_Chain"/>
</dbReference>
<dbReference type="PANTHER" id="PTHR23267">
    <property type="entry name" value="IMMUNOGLOBULIN LIGHT CHAIN"/>
    <property type="match status" value="1"/>
</dbReference>
<dbReference type="Pfam" id="PF07686">
    <property type="entry name" value="V-set"/>
    <property type="match status" value="1"/>
</dbReference>
<dbReference type="SMART" id="SM00409">
    <property type="entry name" value="IG"/>
    <property type="match status" value="1"/>
</dbReference>
<dbReference type="SMART" id="SM00406">
    <property type="entry name" value="IGv"/>
    <property type="match status" value="1"/>
</dbReference>
<dbReference type="SUPFAM" id="SSF48726">
    <property type="entry name" value="Immunoglobulin"/>
    <property type="match status" value="1"/>
</dbReference>
<dbReference type="PROSITE" id="PS50835">
    <property type="entry name" value="IG_LIKE"/>
    <property type="match status" value="1"/>
</dbReference>
<name>KV6A7_MOUSE</name>
<comment type="function">
    <text>Anti-2-phenyl oxazolone (PHOX) Antibody.</text>
</comment>
<keyword id="KW-1064">Adaptive immunity</keyword>
<keyword id="KW-1015">Disulfide bond</keyword>
<keyword id="KW-0374">Hybridoma</keyword>
<keyword id="KW-0391">Immunity</keyword>
<keyword id="KW-1280">Immunoglobulin</keyword>
<keyword id="KW-1185">Reference proteome</keyword>
<evidence type="ECO:0000255" key="1">
    <source>
        <dbReference type="PROSITE-ProRule" id="PRU00114"/>
    </source>
</evidence>
<protein>
    <recommendedName>
        <fullName>Ig kappa chain V-VI region NQ2-48.2.2</fullName>
    </recommendedName>
</protein>
<feature type="chain" id="PRO_0000059816" description="Ig kappa chain V-VI region NQ2-48.2.2">
    <location>
        <begin position="1"/>
        <end position="107" status="greater than"/>
    </location>
</feature>
<feature type="region of interest" description="Framework-1">
    <location>
        <begin position="1"/>
        <end position="23"/>
    </location>
</feature>
<feature type="region of interest" description="Complementarity-determining-1">
    <location>
        <begin position="24"/>
        <end position="33"/>
    </location>
</feature>
<feature type="region of interest" description="Framework-2">
    <location>
        <begin position="34"/>
        <end position="48"/>
    </location>
</feature>
<feature type="region of interest" description="Complementarity-determining-2">
    <location>
        <begin position="49"/>
        <end position="55"/>
    </location>
</feature>
<feature type="region of interest" description="Framework-3">
    <location>
        <begin position="56"/>
        <end position="87"/>
    </location>
</feature>
<feature type="region of interest" description="Complementarity-determining-3">
    <location>
        <begin position="88"/>
        <end position="96"/>
    </location>
</feature>
<feature type="region of interest" description="Framework-4">
    <location>
        <begin position="97"/>
        <end position="106"/>
    </location>
</feature>
<feature type="disulfide bond" evidence="1">
    <location>
        <begin position="23"/>
        <end position="87"/>
    </location>
</feature>
<feature type="non-terminal residue">
    <location>
        <position position="107"/>
    </location>
</feature>